<evidence type="ECO:0000250" key="1">
    <source>
        <dbReference type="UniProtKB" id="P15331"/>
    </source>
</evidence>
<evidence type="ECO:0000250" key="2">
    <source>
        <dbReference type="UniProtKB" id="P21807"/>
    </source>
</evidence>
<evidence type="ECO:0000255" key="3">
    <source>
        <dbReference type="PROSITE-ProRule" id="PRU01188"/>
    </source>
</evidence>
<evidence type="ECO:0000256" key="4">
    <source>
        <dbReference type="SAM" id="MobiDB-lite"/>
    </source>
</evidence>
<evidence type="ECO:0000269" key="5">
    <source>
    </source>
</evidence>
<evidence type="ECO:0000269" key="6">
    <source>
    </source>
</evidence>
<evidence type="ECO:0000269" key="7">
    <source>
    </source>
</evidence>
<evidence type="ECO:0000269" key="8">
    <source>
    </source>
</evidence>
<evidence type="ECO:0000269" key="9">
    <source>
    </source>
</evidence>
<evidence type="ECO:0000269" key="10">
    <source>
    </source>
</evidence>
<evidence type="ECO:0000305" key="11"/>
<dbReference type="EMBL" id="L14565">
    <property type="protein sequence ID" value="AAA60190.1"/>
    <property type="molecule type" value="Genomic_DNA"/>
</dbReference>
<dbReference type="EMBL" id="AC125611">
    <property type="status" value="NOT_ANNOTATED_CDS"/>
    <property type="molecule type" value="Genomic_DNA"/>
</dbReference>
<dbReference type="EMBL" id="BC032703">
    <property type="protein sequence ID" value="AAH32703.1"/>
    <property type="molecule type" value="mRNA"/>
</dbReference>
<dbReference type="CCDS" id="CCDS8783.1">
    <molecule id="P41219-1"/>
</dbReference>
<dbReference type="PIR" id="A55185">
    <property type="entry name" value="A55185"/>
</dbReference>
<dbReference type="RefSeq" id="NP_006253.2">
    <molecule id="P41219-1"/>
    <property type="nucleotide sequence ID" value="NM_006262.3"/>
</dbReference>
<dbReference type="RefSeq" id="XP_005269082.1">
    <property type="nucleotide sequence ID" value="XM_005269025.1"/>
</dbReference>
<dbReference type="SMR" id="P41219"/>
<dbReference type="BioGRID" id="111614">
    <property type="interactions" value="198"/>
</dbReference>
<dbReference type="FunCoup" id="P41219">
    <property type="interactions" value="333"/>
</dbReference>
<dbReference type="IntAct" id="P41219">
    <property type="interactions" value="99"/>
</dbReference>
<dbReference type="MINT" id="P41219"/>
<dbReference type="STRING" id="9606.ENSP00000257860"/>
<dbReference type="GlyCosmos" id="P41219">
    <property type="glycosylation" value="1 site, 1 glycan"/>
</dbReference>
<dbReference type="GlyGen" id="P41219">
    <property type="glycosylation" value="1 site, 1 O-linked glycan (1 site)"/>
</dbReference>
<dbReference type="iPTMnet" id="P41219"/>
<dbReference type="MetOSite" id="P41219"/>
<dbReference type="PhosphoSitePlus" id="P41219"/>
<dbReference type="SwissPalm" id="P41219"/>
<dbReference type="BioMuta" id="PRPH"/>
<dbReference type="DMDM" id="118585871"/>
<dbReference type="jPOST" id="P41219"/>
<dbReference type="MassIVE" id="P41219"/>
<dbReference type="PaxDb" id="9606-ENSP00000257860"/>
<dbReference type="PeptideAtlas" id="P41219"/>
<dbReference type="ProteomicsDB" id="55423">
    <molecule id="P41219-1"/>
</dbReference>
<dbReference type="ProteomicsDB" id="55424">
    <molecule id="P41219-2"/>
</dbReference>
<dbReference type="Antibodypedia" id="3724">
    <property type="antibodies" value="518 antibodies from 38 providers"/>
</dbReference>
<dbReference type="DNASU" id="5630"/>
<dbReference type="Ensembl" id="ENST00000257860.9">
    <molecule id="P41219-1"/>
    <property type="protein sequence ID" value="ENSP00000257860.4"/>
    <property type="gene ID" value="ENSG00000135406.15"/>
</dbReference>
<dbReference type="GeneID" id="5630"/>
<dbReference type="KEGG" id="hsa:5630"/>
<dbReference type="MANE-Select" id="ENST00000257860.9">
    <property type="protein sequence ID" value="ENSP00000257860.4"/>
    <property type="RefSeq nucleotide sequence ID" value="NM_006262.4"/>
    <property type="RefSeq protein sequence ID" value="NP_006253.2"/>
</dbReference>
<dbReference type="UCSC" id="uc001rtu.4">
    <molecule id="P41219-1"/>
    <property type="organism name" value="human"/>
</dbReference>
<dbReference type="AGR" id="HGNC:9461"/>
<dbReference type="CTD" id="5630"/>
<dbReference type="DisGeNET" id="5630"/>
<dbReference type="GeneCards" id="PRPH"/>
<dbReference type="HGNC" id="HGNC:9461">
    <property type="gene designation" value="PRPH"/>
</dbReference>
<dbReference type="HPA" id="ENSG00000135406">
    <property type="expression patterns" value="Tissue enhanced (adrenal gland, intestine, testis)"/>
</dbReference>
<dbReference type="MalaCards" id="PRPH"/>
<dbReference type="MIM" id="105400">
    <property type="type" value="phenotype"/>
</dbReference>
<dbReference type="MIM" id="170710">
    <property type="type" value="gene"/>
</dbReference>
<dbReference type="neXtProt" id="NX_P41219"/>
<dbReference type="OpenTargets" id="ENSG00000135406"/>
<dbReference type="Orphanet" id="803">
    <property type="disease" value="Amyotrophic lateral sclerosis"/>
</dbReference>
<dbReference type="PharmGKB" id="PA33816"/>
<dbReference type="VEuPathDB" id="HostDB:ENSG00000135406"/>
<dbReference type="eggNOG" id="ENOG502QPSH">
    <property type="taxonomic scope" value="Eukaryota"/>
</dbReference>
<dbReference type="GeneTree" id="ENSGT00940000160203"/>
<dbReference type="HOGENOM" id="CLU_012560_7_4_1"/>
<dbReference type="InParanoid" id="P41219"/>
<dbReference type="OMA" id="MSHHPAG"/>
<dbReference type="OrthoDB" id="2441647at2759"/>
<dbReference type="PAN-GO" id="P41219">
    <property type="GO annotations" value="6 GO annotations based on evolutionary models"/>
</dbReference>
<dbReference type="PhylomeDB" id="P41219"/>
<dbReference type="TreeFam" id="TF330122"/>
<dbReference type="PathwayCommons" id="P41219"/>
<dbReference type="SignaLink" id="P41219"/>
<dbReference type="SIGNOR" id="P41219"/>
<dbReference type="BioGRID-ORCS" id="5630">
    <property type="hits" value="17 hits in 1149 CRISPR screens"/>
</dbReference>
<dbReference type="CD-CODE" id="FB4E32DD">
    <property type="entry name" value="Presynaptic clusters and postsynaptic densities"/>
</dbReference>
<dbReference type="GeneWiki" id="Peripherin"/>
<dbReference type="GenomeRNAi" id="5630"/>
<dbReference type="Pharos" id="P41219">
    <property type="development level" value="Tbio"/>
</dbReference>
<dbReference type="PRO" id="PR:P41219"/>
<dbReference type="Proteomes" id="UP000005640">
    <property type="component" value="Chromosome 12"/>
</dbReference>
<dbReference type="RNAct" id="P41219">
    <property type="molecule type" value="protein"/>
</dbReference>
<dbReference type="Bgee" id="ENSG00000135406">
    <property type="expression patterns" value="Expressed in dorsal root ganglion and 145 other cell types or tissues"/>
</dbReference>
<dbReference type="ExpressionAtlas" id="P41219">
    <property type="expression patterns" value="baseline and differential"/>
</dbReference>
<dbReference type="GO" id="GO:0030424">
    <property type="term" value="C:axon"/>
    <property type="evidence" value="ECO:0000318"/>
    <property type="project" value="GO_Central"/>
</dbReference>
<dbReference type="GO" id="GO:0005737">
    <property type="term" value="C:cytoplasm"/>
    <property type="evidence" value="ECO:0007669"/>
    <property type="project" value="UniProtKB-KW"/>
</dbReference>
<dbReference type="GO" id="GO:0070062">
    <property type="term" value="C:extracellular exosome"/>
    <property type="evidence" value="ECO:0007005"/>
    <property type="project" value="UniProtKB"/>
</dbReference>
<dbReference type="GO" id="GO:0005882">
    <property type="term" value="C:intermediate filament"/>
    <property type="evidence" value="ECO:0000304"/>
    <property type="project" value="ProtInc"/>
</dbReference>
<dbReference type="GO" id="GO:0016020">
    <property type="term" value="C:membrane"/>
    <property type="evidence" value="ECO:0007005"/>
    <property type="project" value="UniProtKB"/>
</dbReference>
<dbReference type="GO" id="GO:0043204">
    <property type="term" value="C:perikaryon"/>
    <property type="evidence" value="ECO:0007669"/>
    <property type="project" value="UniProtKB-SubCell"/>
</dbReference>
<dbReference type="GO" id="GO:0005886">
    <property type="term" value="C:plasma membrane"/>
    <property type="evidence" value="ECO:0000318"/>
    <property type="project" value="GO_Central"/>
</dbReference>
<dbReference type="GO" id="GO:0045098">
    <property type="term" value="C:type III intermediate filament"/>
    <property type="evidence" value="ECO:0000318"/>
    <property type="project" value="GO_Central"/>
</dbReference>
<dbReference type="GO" id="GO:0005200">
    <property type="term" value="F:structural constituent of cytoskeleton"/>
    <property type="evidence" value="ECO:0000318"/>
    <property type="project" value="GO_Central"/>
</dbReference>
<dbReference type="GO" id="GO:0005198">
    <property type="term" value="F:structural molecule activity"/>
    <property type="evidence" value="ECO:0000303"/>
    <property type="project" value="ProtInc"/>
</dbReference>
<dbReference type="GO" id="GO:0045109">
    <property type="term" value="P:intermediate filament organization"/>
    <property type="evidence" value="ECO:0000318"/>
    <property type="project" value="GO_Central"/>
</dbReference>
<dbReference type="FunFam" id="1.20.5.1160:FF:000001">
    <property type="entry name" value="Keratin type II"/>
    <property type="match status" value="1"/>
</dbReference>
<dbReference type="FunFam" id="1.20.5.170:FF:000002">
    <property type="entry name" value="Type I keratin KA11"/>
    <property type="match status" value="1"/>
</dbReference>
<dbReference type="FunFam" id="1.20.5.500:FF:000001">
    <property type="entry name" value="Type II keratin 23"/>
    <property type="match status" value="1"/>
</dbReference>
<dbReference type="Gene3D" id="1.20.5.170">
    <property type="match status" value="1"/>
</dbReference>
<dbReference type="Gene3D" id="1.20.5.500">
    <property type="entry name" value="Single helix bin"/>
    <property type="match status" value="1"/>
</dbReference>
<dbReference type="Gene3D" id="1.20.5.1160">
    <property type="entry name" value="Vasodilator-stimulated phosphoprotein"/>
    <property type="match status" value="1"/>
</dbReference>
<dbReference type="InterPro" id="IPR018039">
    <property type="entry name" value="IF_conserved"/>
</dbReference>
<dbReference type="InterPro" id="IPR039008">
    <property type="entry name" value="IF_rod_dom"/>
</dbReference>
<dbReference type="InterPro" id="IPR006821">
    <property type="entry name" value="Intermed_filament_DNA-bd"/>
</dbReference>
<dbReference type="InterPro" id="IPR050405">
    <property type="entry name" value="Intermediate_filament"/>
</dbReference>
<dbReference type="InterPro" id="IPR002957">
    <property type="entry name" value="Keratin_I"/>
</dbReference>
<dbReference type="PANTHER" id="PTHR45652">
    <property type="entry name" value="GLIAL FIBRILLARY ACIDIC PROTEIN"/>
    <property type="match status" value="1"/>
</dbReference>
<dbReference type="PANTHER" id="PTHR45652:SF14">
    <property type="entry name" value="PERIPHERIN"/>
    <property type="match status" value="1"/>
</dbReference>
<dbReference type="Pfam" id="PF00038">
    <property type="entry name" value="Filament"/>
    <property type="match status" value="1"/>
</dbReference>
<dbReference type="Pfam" id="PF04732">
    <property type="entry name" value="Filament_head"/>
    <property type="match status" value="1"/>
</dbReference>
<dbReference type="PRINTS" id="PR01248">
    <property type="entry name" value="TYPE1KERATIN"/>
</dbReference>
<dbReference type="SMART" id="SM01391">
    <property type="entry name" value="Filament"/>
    <property type="match status" value="1"/>
</dbReference>
<dbReference type="SUPFAM" id="SSF64593">
    <property type="entry name" value="Intermediate filament protein, coiled coil region"/>
    <property type="match status" value="2"/>
</dbReference>
<dbReference type="PROSITE" id="PS00226">
    <property type="entry name" value="IF_ROD_1"/>
    <property type="match status" value="1"/>
</dbReference>
<dbReference type="PROSITE" id="PS51842">
    <property type="entry name" value="IF_ROD_2"/>
    <property type="match status" value="1"/>
</dbReference>
<name>PERI_HUMAN</name>
<protein>
    <recommendedName>
        <fullName>Peripherin</fullName>
    </recommendedName>
    <alternativeName>
        <fullName>Neurofilament 4</fullName>
    </alternativeName>
</protein>
<feature type="chain" id="PRO_0000063779" description="Peripherin">
    <location>
        <begin position="1"/>
        <end position="470"/>
    </location>
</feature>
<feature type="domain" description="IF rod" evidence="3">
    <location>
        <begin position="97"/>
        <end position="407"/>
    </location>
</feature>
<feature type="region of interest" description="Head">
    <location>
        <begin position="1"/>
        <end position="99"/>
    </location>
</feature>
<feature type="region of interest" description="Coil 1A">
    <location>
        <begin position="100"/>
        <end position="132"/>
    </location>
</feature>
<feature type="region of interest" description="Linker 1">
    <location>
        <begin position="133"/>
        <end position="143"/>
    </location>
</feature>
<feature type="region of interest" description="Coil 1B">
    <location>
        <begin position="144"/>
        <end position="239"/>
    </location>
</feature>
<feature type="region of interest" description="Linker 2">
    <location>
        <begin position="240"/>
        <end position="262"/>
    </location>
</feature>
<feature type="region of interest" description="Coil 2">
    <location>
        <begin position="263"/>
        <end position="405"/>
    </location>
</feature>
<feature type="region of interest" description="Tail">
    <location>
        <begin position="406"/>
        <end position="470"/>
    </location>
</feature>
<feature type="region of interest" description="Disordered" evidence="4">
    <location>
        <begin position="447"/>
        <end position="470"/>
    </location>
</feature>
<feature type="compositionally biased region" description="Basic and acidic residues" evidence="4">
    <location>
        <begin position="454"/>
        <end position="470"/>
    </location>
</feature>
<feature type="modified residue" description="3'-nitrotyrosine" evidence="2">
    <location>
        <position position="17"/>
    </location>
</feature>
<feature type="modified residue" description="Phosphoserine" evidence="2">
    <location>
        <position position="28"/>
    </location>
</feature>
<feature type="modified residue" description="Phosphoserine" evidence="2">
    <location>
        <position position="50"/>
    </location>
</feature>
<feature type="modified residue" description="Phosphoserine" evidence="1">
    <location>
        <position position="59"/>
    </location>
</feature>
<feature type="modified residue" description="3'-nitrotyrosine" evidence="2">
    <location>
        <position position="379"/>
    </location>
</feature>
<feature type="modified residue" description="Phosphotyrosine" evidence="2">
    <location>
        <position position="470"/>
    </location>
</feature>
<feature type="splice variant" id="VSP_021159" description="In isoform 2." evidence="11">
    <original>E</original>
    <variation>EQ</variation>
    <location>
        <position position="449"/>
    </location>
</feature>
<feature type="sequence variant" id="VAR_083259" description="In ALS; uncertain significance; dbSNP:rs267607528." evidence="8">
    <original>R</original>
    <variation>P</variation>
    <location>
        <position position="133"/>
    </location>
</feature>
<feature type="sequence variant" id="VAR_083260" description="In ALS; uncertain significance; leads to filamentous aggregate formation; dbSNP:rs58599399." evidence="6 8">
    <original>D</original>
    <variation>Y</variation>
    <location>
        <position position="141"/>
    </location>
</feature>
<feature type="sequence conflict" description="In Ref. 1; AAA60190." evidence="11" ref="1">
    <original>G</original>
    <variation>R</variation>
    <location>
        <position position="68"/>
    </location>
</feature>
<organism>
    <name type="scientific">Homo sapiens</name>
    <name type="common">Human</name>
    <dbReference type="NCBI Taxonomy" id="9606"/>
    <lineage>
        <taxon>Eukaryota</taxon>
        <taxon>Metazoa</taxon>
        <taxon>Chordata</taxon>
        <taxon>Craniata</taxon>
        <taxon>Vertebrata</taxon>
        <taxon>Euteleostomi</taxon>
        <taxon>Mammalia</taxon>
        <taxon>Eutheria</taxon>
        <taxon>Euarchontoglires</taxon>
        <taxon>Primates</taxon>
        <taxon>Haplorrhini</taxon>
        <taxon>Catarrhini</taxon>
        <taxon>Hominidae</taxon>
        <taxon>Homo</taxon>
    </lineage>
</organism>
<gene>
    <name type="primary">PRPH</name>
    <name type="synonym">NEF4</name>
    <name type="synonym">PRPH1</name>
</gene>
<comment type="function">
    <text evidence="1 2 5 6">Class-III neuronal intermediate filament protein (By similarity). May form an independent structural network without the involvement of other neurofilaments or may cooperate with the neuronal intermediate filament proteins NEFL, NEFH, NEFM and INA to form a filamentous network (PubMed:15322088, PubMed:15446584). Assembly of the neuronal intermediate filaments may be regulated by RAB7A (By similarity). Plays a role in the development of unmyelinated sensory neurons (By similarity). May be involved in axon elongation and axon regeneration after injury (By similarity). Inhibits neurite extension in type II spiral ganglion neurons in the cochlea (By similarity).</text>
</comment>
<comment type="subunit">
    <text evidence="1 2 6 7 10">Forms homodimers (in vitro) (By similarity). Homopolymerizes into a filamentous network (in vitro) (PubMed:15446584). Forms heterodimers with NEFL, NEFM or NEFH (in vitro) (By similarity). Interacts with DST (via C-terminus) (By similarity). Interacts with RAB7A; the interaction is direct (PubMed:23179371). Interacts with PRKCE (via phorbol-ester/DAG-type 2 domain) (PubMed:18408015).</text>
</comment>
<comment type="interaction">
    <interactant intactId="EBI-752074">
        <id>P41219</id>
    </interactant>
    <interactant intactId="EBI-25844820">
        <id>Q86TN1</id>
        <label>ARNT2</label>
    </interactant>
    <organismsDiffer>false</organismsDiffer>
    <experiments>3</experiments>
</comment>
<comment type="interaction">
    <interactant intactId="EBI-752074">
        <id>P41219</id>
    </interactant>
    <interactant intactId="EBI-2410266">
        <id>Q8WXF7</id>
        <label>ATL1</label>
    </interactant>
    <organismsDiffer>false</organismsDiffer>
    <experiments>3</experiments>
</comment>
<comment type="interaction">
    <interactant intactId="EBI-752074">
        <id>P41219</id>
    </interactant>
    <interactant intactId="EBI-2837444">
        <id>Q8WUW1</id>
        <label>BRK1</label>
    </interactant>
    <organismsDiffer>false</organismsDiffer>
    <experiments>3</experiments>
</comment>
<comment type="interaction">
    <interactant intactId="EBI-752074">
        <id>P41219</id>
    </interactant>
    <interactant intactId="EBI-744556">
        <id>Q96HB5</id>
        <label>CCDC120</label>
    </interactant>
    <organismsDiffer>false</organismsDiffer>
    <experiments>3</experiments>
</comment>
<comment type="interaction">
    <interactant intactId="EBI-752074">
        <id>P41219</id>
    </interactant>
    <interactant intactId="EBI-295634">
        <id>Q16543</id>
        <label>CDC37</label>
    </interactant>
    <organismsDiffer>false</organismsDiffer>
    <experiments>3</experiments>
</comment>
<comment type="interaction">
    <interactant intactId="EBI-752074">
        <id>P41219</id>
    </interactant>
    <interactant intactId="EBI-1210604">
        <id>Q7Z7K6</id>
        <label>CENPV</label>
    </interactant>
    <organismsDiffer>false</organismsDiffer>
    <experiments>3</experiments>
</comment>
<comment type="interaction">
    <interactant intactId="EBI-752074">
        <id>P41219</id>
    </interactant>
    <interactant intactId="EBI-350590">
        <id>Q9UNS2</id>
        <label>COPS3</label>
    </interactant>
    <organismsDiffer>false</organismsDiffer>
    <experiments>3</experiments>
</comment>
<comment type="interaction">
    <interactant intactId="EBI-752074">
        <id>P41219</id>
    </interactant>
    <interactant intactId="EBI-6875961">
        <id>P02489</id>
        <label>CRYAA</label>
    </interactant>
    <organismsDiffer>false</organismsDiffer>
    <experiments>3</experiments>
</comment>
<comment type="interaction">
    <interactant intactId="EBI-752074">
        <id>P41219</id>
    </interactant>
    <interactant intactId="EBI-6873363">
        <id>Q8WUE5</id>
        <label>CT55</label>
    </interactant>
    <organismsDiffer>false</organismsDiffer>
    <experiments>3</experiments>
</comment>
<comment type="interaction">
    <interactant intactId="EBI-752074">
        <id>P41219</id>
    </interactant>
    <interactant intactId="EBI-351257">
        <id>P26196</id>
        <label>DDX6</label>
    </interactant>
    <organismsDiffer>false</organismsDiffer>
    <experiments>3</experiments>
</comment>
<comment type="interaction">
    <interactant intactId="EBI-752074">
        <id>P41219</id>
    </interactant>
    <interactant intactId="EBI-1055572">
        <id>P17661</id>
        <label>DES</label>
    </interactant>
    <organismsDiffer>false</organismsDiffer>
    <experiments>7</experiments>
</comment>
<comment type="interaction">
    <interactant intactId="EBI-752074">
        <id>P41219</id>
    </interactant>
    <interactant intactId="EBI-9246952">
        <id>Q8TC29</id>
        <label>ENKUR</label>
    </interactant>
    <organismsDiffer>false</organismsDiffer>
    <experiments>3</experiments>
</comment>
<comment type="interaction">
    <interactant intactId="EBI-752074">
        <id>P41219</id>
    </interactant>
    <interactant intactId="EBI-10290462">
        <id>Q96KS9</id>
        <label>FAM167A</label>
    </interactant>
    <organismsDiffer>false</organismsDiffer>
    <experiments>4</experiments>
</comment>
<comment type="interaction">
    <interactant intactId="EBI-752074">
        <id>P41219</id>
    </interactant>
    <interactant intactId="EBI-11977403">
        <id>A0A0C3SFZ9</id>
        <label>FCHO1</label>
    </interactant>
    <organismsDiffer>false</organismsDiffer>
    <experiments>3</experiments>
</comment>
<comment type="interaction">
    <interactant intactId="EBI-752074">
        <id>P41219</id>
    </interactant>
    <interactant intactId="EBI-395719">
        <id>Q99871</id>
        <label>HAUS7</label>
    </interactant>
    <organismsDiffer>false</organismsDiffer>
    <experiments>3</experiments>
</comment>
<comment type="interaction">
    <interactant intactId="EBI-752074">
        <id>P41219</id>
    </interactant>
    <interactant intactId="EBI-11742277">
        <id>Q8IY31-2</id>
        <label>IFT20</label>
    </interactant>
    <organismsDiffer>false</organismsDiffer>
    <experiments>3</experiments>
</comment>
<comment type="interaction">
    <interactant intactId="EBI-752074">
        <id>P41219</id>
    </interactant>
    <interactant intactId="EBI-6509505">
        <id>Q0VD86</id>
        <label>INCA1</label>
    </interactant>
    <organismsDiffer>false</organismsDiffer>
    <experiments>3</experiments>
</comment>
<comment type="interaction">
    <interactant intactId="EBI-752074">
        <id>P41219</id>
    </interactant>
    <interactant intactId="EBI-743960">
        <id>Q8N5Z5</id>
        <label>KCTD17</label>
    </interactant>
    <organismsDiffer>false</organismsDiffer>
    <experiments>3</experiments>
</comment>
<comment type="interaction">
    <interactant intactId="EBI-752074">
        <id>P41219</id>
    </interactant>
    <interactant intactId="EBI-739493">
        <id>Q6ZU52</id>
        <label>KIAA0408</label>
    </interactant>
    <organismsDiffer>false</organismsDiffer>
    <experiments>3</experiments>
</comment>
<comment type="interaction">
    <interactant intactId="EBI-752074">
        <id>P41219</id>
    </interactant>
    <interactant intactId="EBI-10188326">
        <id>Q5T5P2-6</id>
        <label>KIAA1217</label>
    </interactant>
    <organismsDiffer>false</organismsDiffer>
    <experiments>3</experiments>
</comment>
<comment type="interaction">
    <interactant intactId="EBI-752074">
        <id>P41219</id>
    </interactant>
    <interactant intactId="EBI-14069005">
        <id>Q9BVG8-5</id>
        <label>KIFC3</label>
    </interactant>
    <organismsDiffer>false</organismsDiffer>
    <experiments>3</experiments>
</comment>
<comment type="interaction">
    <interactant intactId="EBI-752074">
        <id>P41219</id>
    </interactant>
    <interactant intactId="EBI-1643885">
        <id>Q6P597</id>
        <label>KLC3</label>
    </interactant>
    <organismsDiffer>false</organismsDiffer>
    <experiments>3</experiments>
</comment>
<comment type="interaction">
    <interactant intactId="EBI-752074">
        <id>P41219</id>
    </interactant>
    <interactant intactId="EBI-702178">
        <id>P02533</id>
        <label>KRT14</label>
    </interactant>
    <organismsDiffer>false</organismsDiffer>
    <experiments>3</experiments>
</comment>
<comment type="interaction">
    <interactant intactId="EBI-752074">
        <id>P41219</id>
    </interactant>
    <interactant intactId="EBI-356410">
        <id>P08779</id>
        <label>KRT16</label>
    </interactant>
    <organismsDiffer>false</organismsDiffer>
    <experiments>3</experiments>
</comment>
<comment type="interaction">
    <interactant intactId="EBI-752074">
        <id>P41219</id>
    </interactant>
    <interactant intactId="EBI-742756">
        <id>P08727</id>
        <label>KRT19</label>
    </interactant>
    <organismsDiffer>false</organismsDiffer>
    <experiments>6</experiments>
</comment>
<comment type="interaction">
    <interactant intactId="EBI-752074">
        <id>P41219</id>
    </interactant>
    <interactant intactId="EBI-742094">
        <id>P35900</id>
        <label>KRT20</label>
    </interactant>
    <organismsDiffer>false</organismsDiffer>
    <experiments>6</experiments>
</comment>
<comment type="interaction">
    <interactant intactId="EBI-752074">
        <id>P41219</id>
    </interactant>
    <interactant intactId="EBI-2952736">
        <id>Q2M2I5</id>
        <label>KRT24</label>
    </interactant>
    <organismsDiffer>false</organismsDiffer>
    <experiments>3</experiments>
</comment>
<comment type="interaction">
    <interactant intactId="EBI-752074">
        <id>P41219</id>
    </interactant>
    <interactant intactId="EBI-3044087">
        <id>Q7Z3Y8</id>
        <label>KRT27</label>
    </interactant>
    <organismsDiffer>false</organismsDiffer>
    <experiments>3</experiments>
</comment>
<comment type="interaction">
    <interactant intactId="EBI-752074">
        <id>P41219</id>
    </interactant>
    <interactant intactId="EBI-948001">
        <id>Q15323</id>
        <label>KRT31</label>
    </interactant>
    <organismsDiffer>false</organismsDiffer>
    <experiments>3</experiments>
</comment>
<comment type="interaction">
    <interactant intactId="EBI-752074">
        <id>P41219</id>
    </interactant>
    <interactant intactId="EBI-1049638">
        <id>Q14525</id>
        <label>KRT33B</label>
    </interactant>
    <organismsDiffer>false</organismsDiffer>
    <experiments>3</experiments>
</comment>
<comment type="interaction">
    <interactant intactId="EBI-752074">
        <id>P41219</id>
    </interactant>
    <interactant intactId="EBI-2949715">
        <id>O95678</id>
        <label>KRT75</label>
    </interactant>
    <organismsDiffer>false</organismsDiffer>
    <experiments>3</experiments>
</comment>
<comment type="interaction">
    <interactant intactId="EBI-752074">
        <id>P41219</id>
    </interactant>
    <interactant intactId="EBI-8473670">
        <id>O95447</id>
        <label>LCA5L</label>
    </interactant>
    <organismsDiffer>false</organismsDiffer>
    <experiments>3</experiments>
</comment>
<comment type="interaction">
    <interactant intactId="EBI-752074">
        <id>P41219</id>
    </interactant>
    <interactant intactId="EBI-726510">
        <id>Q96BZ8</id>
        <label>LENG1</label>
    </interactant>
    <organismsDiffer>false</organismsDiffer>
    <experiments>3</experiments>
</comment>
<comment type="interaction">
    <interactant intactId="EBI-752074">
        <id>P41219</id>
    </interactant>
    <interactant intactId="EBI-739832">
        <id>Q8TBB1</id>
        <label>LNX1</label>
    </interactant>
    <organismsDiffer>false</organismsDiffer>
    <experiments>6</experiments>
</comment>
<comment type="interaction">
    <interactant intactId="EBI-752074">
        <id>P41219</id>
    </interactant>
    <interactant intactId="EBI-12898559">
        <id>Q8IV03</id>
        <label>LURAP1L</label>
    </interactant>
    <organismsDiffer>false</organismsDiffer>
    <experiments>3</experiments>
</comment>
<comment type="interaction">
    <interactant intactId="EBI-752074">
        <id>P41219</id>
    </interactant>
    <interactant intactId="EBI-746778">
        <id>Q96A72</id>
        <label>MAGOHB</label>
    </interactant>
    <organismsDiffer>false</organismsDiffer>
    <experiments>3</experiments>
</comment>
<comment type="interaction">
    <interactant intactId="EBI-752074">
        <id>P41219</id>
    </interactant>
    <interactant intactId="EBI-3908303">
        <id>Q13562</id>
        <label>NEUROD1</label>
    </interactant>
    <organismsDiffer>false</organismsDiffer>
    <experiments>3</experiments>
</comment>
<comment type="interaction">
    <interactant intactId="EBI-752074">
        <id>P41219</id>
    </interactant>
    <interactant intactId="EBI-18577082">
        <id>O15381-5</id>
        <label>NVL</label>
    </interactant>
    <organismsDiffer>false</organismsDiffer>
    <experiments>3</experiments>
</comment>
<comment type="interaction">
    <interactant intactId="EBI-752074">
        <id>P41219</id>
    </interactant>
    <interactant intactId="EBI-398874">
        <id>Q9UBU9</id>
        <label>NXF1</label>
    </interactant>
    <organismsDiffer>false</organismsDiffer>
    <experiments>3</experiments>
</comment>
<comment type="interaction">
    <interactant intactId="EBI-752074">
        <id>P41219</id>
    </interactant>
    <interactant intactId="EBI-11022007">
        <id>Q9HBE1-4</id>
        <label>PATZ1</label>
    </interactant>
    <organismsDiffer>false</organismsDiffer>
    <experiments>3</experiments>
</comment>
<comment type="interaction">
    <interactant intactId="EBI-752074">
        <id>P41219</id>
    </interactant>
    <interactant intactId="EBI-25844430">
        <id>O14813</id>
        <label>PHOX2A</label>
    </interactant>
    <organismsDiffer>false</organismsDiffer>
    <experiments>3</experiments>
</comment>
<comment type="interaction">
    <interactant intactId="EBI-752074">
        <id>P41219</id>
    </interactant>
    <interactant intactId="EBI-629434">
        <id>O75925</id>
        <label>PIAS1</label>
    </interactant>
    <organismsDiffer>false</organismsDiffer>
    <experiments>3</experiments>
</comment>
<comment type="interaction">
    <interactant intactId="EBI-752074">
        <id>P41219</id>
    </interactant>
    <interactant intactId="EBI-348567">
        <id>O75928-2</id>
        <label>PIAS2</label>
    </interactant>
    <organismsDiffer>false</organismsDiffer>
    <experiments>3</experiments>
</comment>
<comment type="interaction">
    <interactant intactId="EBI-752074">
        <id>P41219</id>
    </interactant>
    <interactant intactId="EBI-10232538">
        <id>Q8WWB5</id>
        <label>PIH1D2</label>
    </interactant>
    <organismsDiffer>false</organismsDiffer>
    <experiments>3</experiments>
</comment>
<comment type="interaction">
    <interactant intactId="EBI-752074">
        <id>P41219</id>
    </interactant>
    <interactant intactId="EBI-1105153">
        <id>Q96KQ4</id>
        <label>PPP1R13B</label>
    </interactant>
    <organismsDiffer>false</organismsDiffer>
    <experiments>3</experiments>
</comment>
<comment type="interaction">
    <interactant intactId="EBI-752074">
        <id>P41219</id>
    </interactant>
    <interactant intactId="EBI-10293968">
        <id>Q96T49</id>
        <label>PPP1R16B</label>
    </interactant>
    <organismsDiffer>false</organismsDiffer>
    <experiments>3</experiments>
</comment>
<comment type="interaction">
    <interactant intactId="EBI-752074">
        <id>P41219</id>
    </interactant>
    <interactant intactId="EBI-2557469">
        <id>Q6NYC8</id>
        <label>PPP1R18</label>
    </interactant>
    <organismsDiffer>false</organismsDiffer>
    <experiments>3</experiments>
</comment>
<comment type="interaction">
    <interactant intactId="EBI-752074">
        <id>P41219</id>
    </interactant>
    <interactant intactId="EBI-1383852">
        <id>P54646</id>
        <label>PRKAA2</label>
    </interactant>
    <organismsDiffer>false</organismsDiffer>
    <experiments>3</experiments>
</comment>
<comment type="interaction">
    <interactant intactId="EBI-752074">
        <id>P41219</id>
    </interactant>
    <interactant intactId="EBI-359352">
        <id>P25786</id>
        <label>PSMA1</label>
    </interactant>
    <organismsDiffer>false</organismsDiffer>
    <experiments>3</experiments>
</comment>
<comment type="interaction">
    <interactant intactId="EBI-752074">
        <id>P41219</id>
    </interactant>
    <interactant intactId="EBI-741332">
        <id>P57052</id>
        <label>RBM11</label>
    </interactant>
    <organismsDiffer>false</organismsDiffer>
    <experiments>3</experiments>
</comment>
<comment type="interaction">
    <interactant intactId="EBI-752074">
        <id>P41219</id>
    </interactant>
    <interactant intactId="EBI-25829984">
        <id>Q9ULX5</id>
        <label>RNF112</label>
    </interactant>
    <organismsDiffer>false</organismsDiffer>
    <experiments>3</experiments>
</comment>
<comment type="interaction">
    <interactant intactId="EBI-752074">
        <id>P41219</id>
    </interactant>
    <interactant intactId="EBI-743938">
        <id>Q96D59</id>
        <label>RNF183</label>
    </interactant>
    <organismsDiffer>false</organismsDiffer>
    <experiments>3</experiments>
</comment>
<comment type="interaction">
    <interactant intactId="EBI-752074">
        <id>P41219</id>
    </interactant>
    <interactant intactId="EBI-8636004">
        <id>Q96GQ5</id>
        <label>RUSF1</label>
    </interactant>
    <organismsDiffer>false</organismsDiffer>
    <experiments>3</experiments>
</comment>
<comment type="interaction">
    <interactant intactId="EBI-752074">
        <id>P41219</id>
    </interactant>
    <interactant intactId="EBI-11528848">
        <id>Q8N6K7-2</id>
        <label>SAMD3</label>
    </interactant>
    <organismsDiffer>false</organismsDiffer>
    <experiments>3</experiments>
</comment>
<comment type="interaction">
    <interactant intactId="EBI-752074">
        <id>P41219</id>
    </interactant>
    <interactant intactId="EBI-358489">
        <id>Q96GM5</id>
        <label>SMARCD1</label>
    </interactant>
    <organismsDiffer>false</organismsDiffer>
    <experiments>3</experiments>
</comment>
<comment type="interaction">
    <interactant intactId="EBI-752074">
        <id>P41219</id>
    </interactant>
    <interactant intactId="EBI-632715">
        <id>Q13573</id>
        <label>SNW1</label>
    </interactant>
    <organismsDiffer>false</organismsDiffer>
    <experiments>3</experiments>
</comment>
<comment type="interaction">
    <interactant intactId="EBI-752074">
        <id>P41219</id>
    </interactant>
    <interactant intactId="EBI-710310">
        <id>Q15560</id>
        <label>TCEA2</label>
    </interactant>
    <organismsDiffer>false</organismsDiffer>
    <experiments>3</experiments>
</comment>
<comment type="interaction">
    <interactant intactId="EBI-752074">
        <id>P41219</id>
    </interactant>
    <interactant intactId="EBI-3923210">
        <id>Q8TDR4</id>
        <label>TCP10L</label>
    </interactant>
    <organismsDiffer>false</organismsDiffer>
    <experiments>6</experiments>
</comment>
<comment type="interaction">
    <interactant intactId="EBI-752074">
        <id>P41219</id>
    </interactant>
    <interactant intactId="EBI-2562799">
        <id>Q86WV5</id>
        <label>TEN1</label>
    </interactant>
    <organismsDiffer>false</organismsDiffer>
    <experiments>3</experiments>
</comment>
<comment type="interaction">
    <interactant intactId="EBI-752074">
        <id>P41219</id>
    </interactant>
    <interactant intactId="EBI-3922833">
        <id>Q969K7</id>
        <label>TMEM54</label>
    </interactant>
    <organismsDiffer>false</organismsDiffer>
    <experiments>3</experiments>
</comment>
<comment type="interaction">
    <interactant intactId="EBI-752074">
        <id>P41219</id>
    </interactant>
    <interactant intactId="EBI-9090990">
        <id>Q5W5X9-3</id>
        <label>TTC23</label>
    </interactant>
    <organismsDiffer>false</organismsDiffer>
    <experiments>3</experiments>
</comment>
<comment type="interaction">
    <interactant intactId="EBI-752074">
        <id>P41219</id>
    </interactant>
    <interactant intactId="EBI-10964469">
        <id>Q9UGJ1-2</id>
        <label>TUBGCP4</label>
    </interactant>
    <organismsDiffer>false</organismsDiffer>
    <experiments>3</experiments>
</comment>
<comment type="interaction">
    <interactant intactId="EBI-752074">
        <id>P41219</id>
    </interactant>
    <interactant intactId="EBI-8601749">
        <id>Q495M9</id>
        <label>USH1G</label>
    </interactant>
    <organismsDiffer>false</organismsDiffer>
    <experiments>3</experiments>
</comment>
<comment type="interaction">
    <interactant intactId="EBI-752074">
        <id>P41219</id>
    </interactant>
    <interactant intactId="EBI-353844">
        <id>P08670</id>
        <label>VIM</label>
    </interactant>
    <organismsDiffer>false</organismsDiffer>
    <experiments>4</experiments>
</comment>
<comment type="interaction">
    <interactant intactId="EBI-752074">
        <id>P41219</id>
    </interactant>
    <interactant intactId="EBI-25840023">
        <id>Q15007-2</id>
        <label>WTAP</label>
    </interactant>
    <organismsDiffer>false</organismsDiffer>
    <experiments>3</experiments>
</comment>
<comment type="interaction">
    <interactant intactId="EBI-752074">
        <id>P41219</id>
    </interactant>
    <interactant intactId="EBI-14104088">
        <id>Q53FD0-2</id>
        <label>ZC2HC1C</label>
    </interactant>
    <organismsDiffer>false</organismsDiffer>
    <experiments>3</experiments>
</comment>
<comment type="interaction">
    <interactant intactId="EBI-752074">
        <id>P41219</id>
    </interactant>
    <interactant intactId="EBI-747993">
        <id>Q9NQZ6</id>
        <label>ZC4H2</label>
    </interactant>
    <organismsDiffer>false</organismsDiffer>
    <experiments>3</experiments>
</comment>
<comment type="interaction">
    <interactant intactId="EBI-752074">
        <id>P41219</id>
    </interactant>
    <interactant intactId="EBI-2682299">
        <id>Q96NC0</id>
        <label>ZMAT2</label>
    </interactant>
    <organismsDiffer>false</organismsDiffer>
    <experiments>3</experiments>
</comment>
<comment type="interaction">
    <interactant intactId="EBI-752074">
        <id>P41219</id>
    </interactant>
    <interactant intactId="EBI-749023">
        <id>Q9UNY5</id>
        <label>ZNF232</label>
    </interactant>
    <organismsDiffer>false</organismsDiffer>
    <experiments>3</experiments>
</comment>
<comment type="interaction">
    <interactant intactId="EBI-752074">
        <id>P41219</id>
    </interactant>
    <interactant intactId="EBI-12010736">
        <id>Q8N0Y2-2</id>
        <label>ZNF444</label>
    </interactant>
    <organismsDiffer>false</organismsDiffer>
    <experiments>3</experiments>
</comment>
<comment type="interaction">
    <interactant intactId="EBI-752074">
        <id>P41219</id>
    </interactant>
    <interactant intactId="EBI-10172590">
        <id>Q7Z3I7</id>
        <label>ZNF572</label>
    </interactant>
    <organismsDiffer>false</organismsDiffer>
    <experiments>3</experiments>
</comment>
<comment type="interaction">
    <interactant intactId="EBI-752074">
        <id>P41219</id>
    </interactant>
    <interactant intactId="EBI-25492395">
        <id>PRO_0000449633</id>
        <label>rep</label>
        <dbReference type="UniProtKB" id="P0DTD1"/>
    </interactant>
    <organismsDiffer>true</organismsDiffer>
    <experiments>3</experiments>
</comment>
<comment type="subcellular location">
    <subcellularLocation>
        <location evidence="5 6 7">Cytoplasm</location>
        <location evidence="5 6 7">Cytoskeleton</location>
    </subcellularLocation>
    <subcellularLocation>
        <location evidence="1">Cell projection</location>
        <location evidence="1">Axon</location>
    </subcellularLocation>
    <subcellularLocation>
        <location evidence="1">Perikaryon</location>
    </subcellularLocation>
</comment>
<comment type="alternative products">
    <event type="alternative splicing"/>
    <isoform>
        <id>P41219-1</id>
        <name>1</name>
        <sequence type="displayed"/>
    </isoform>
    <isoform>
        <id>P41219-2</id>
        <name>2</name>
        <sequence type="described" ref="VSP_021159"/>
    </isoform>
</comment>
<comment type="tissue specificity">
    <text evidence="9">Expressed in the neurons of the outer hair cells in the organ of Corti and to a lesser extent in type I spiral ganglion cells.</text>
</comment>
<comment type="PTM">
    <text evidence="2">Phosphorylated; phosphorylation increases after nerve injury in regenerating neurons.</text>
</comment>
<comment type="disease" evidence="5 6 8">
    <disease id="DI-00107">
        <name>Amyotrophic lateral sclerosis</name>
        <acronym>ALS</acronym>
        <description>A neurodegenerative disorder affecting upper motor neurons in the brain and lower motor neurons in the brain stem and spinal cord, resulting in fatal paralysis. Sensory abnormalities are absent. The pathologic hallmarks of the disease include pallor of the corticospinal tract due to loss of motor neurons, presence of ubiquitin-positive inclusions within surviving motor neurons, and deposition of pathologic aggregates. The etiology of amyotrophic lateral sclerosis is likely to be multifactorial, involving both genetic and environmental factors. The disease is inherited in 5-10% of the cases.</description>
        <dbReference type="MIM" id="105400"/>
    </disease>
    <text>Disease susceptibility may be associated with variants affecting the gene represented in this entry.</text>
</comment>
<comment type="miscellaneous">
    <molecule>Isoform 2</molecule>
    <text evidence="11">Gene prediction based on similarity to orthologs.</text>
</comment>
<comment type="similarity">
    <text evidence="3">Belongs to the intermediate filament family.</text>
</comment>
<comment type="online information" name="Wikipedia">
    <link uri="https://en.wikipedia.org/wiki/Peripherin"/>
    <text>Peripherin entry</text>
</comment>
<accession>P41219</accession>
<accession>Q8N577</accession>
<keyword id="KW-0025">Alternative splicing</keyword>
<keyword id="KW-0036">Amyotrophic lateral sclerosis</keyword>
<keyword id="KW-0966">Cell projection</keyword>
<keyword id="KW-0175">Coiled coil</keyword>
<keyword id="KW-0963">Cytoplasm</keyword>
<keyword id="KW-0206">Cytoskeleton</keyword>
<keyword id="KW-0225">Disease variant</keyword>
<keyword id="KW-0403">Intermediate filament</keyword>
<keyword id="KW-0523">Neurodegeneration</keyword>
<keyword id="KW-0944">Nitration</keyword>
<keyword id="KW-0597">Phosphoprotein</keyword>
<keyword id="KW-1267">Proteomics identification</keyword>
<keyword id="KW-1185">Reference proteome</keyword>
<proteinExistence type="evidence at protein level"/>
<reference key="1">
    <citation type="journal article" date="1994" name="Genomics">
        <title>The structure of the human peripherin gene (PRPH) and identification of potential regulatory elements.</title>
        <authorList>
            <person name="Foley J."/>
            <person name="Ley C.A."/>
            <person name="Parysek L.M."/>
        </authorList>
    </citation>
    <scope>NUCLEOTIDE SEQUENCE [GENOMIC DNA]</scope>
    <scope>ALTERNATIVE SPLICING (ISOFORM 2)</scope>
    <source>
        <tissue>Placenta</tissue>
    </source>
</reference>
<reference key="2">
    <citation type="journal article" date="2006" name="Nature">
        <title>The finished DNA sequence of human chromosome 12.</title>
        <authorList>
            <person name="Scherer S.E."/>
            <person name="Muzny D.M."/>
            <person name="Buhay C.J."/>
            <person name="Chen R."/>
            <person name="Cree A."/>
            <person name="Ding Y."/>
            <person name="Dugan-Rocha S."/>
            <person name="Gill R."/>
            <person name="Gunaratne P."/>
            <person name="Harris R.A."/>
            <person name="Hawes A.C."/>
            <person name="Hernandez J."/>
            <person name="Hodgson A.V."/>
            <person name="Hume J."/>
            <person name="Jackson A."/>
            <person name="Khan Z.M."/>
            <person name="Kovar-Smith C."/>
            <person name="Lewis L.R."/>
            <person name="Lozado R.J."/>
            <person name="Metzker M.L."/>
            <person name="Milosavljevic A."/>
            <person name="Miner G.R."/>
            <person name="Montgomery K.T."/>
            <person name="Morgan M.B."/>
            <person name="Nazareth L.V."/>
            <person name="Scott G."/>
            <person name="Sodergren E."/>
            <person name="Song X.-Z."/>
            <person name="Steffen D."/>
            <person name="Lovering R.C."/>
            <person name="Wheeler D.A."/>
            <person name="Worley K.C."/>
            <person name="Yuan Y."/>
            <person name="Zhang Z."/>
            <person name="Adams C.Q."/>
            <person name="Ansari-Lari M.A."/>
            <person name="Ayele M."/>
            <person name="Brown M.J."/>
            <person name="Chen G."/>
            <person name="Chen Z."/>
            <person name="Clerc-Blankenburg K.P."/>
            <person name="Davis C."/>
            <person name="Delgado O."/>
            <person name="Dinh H.H."/>
            <person name="Draper H."/>
            <person name="Gonzalez-Garay M.L."/>
            <person name="Havlak P."/>
            <person name="Jackson L.R."/>
            <person name="Jacob L.S."/>
            <person name="Kelly S.H."/>
            <person name="Li L."/>
            <person name="Li Z."/>
            <person name="Liu J."/>
            <person name="Liu W."/>
            <person name="Lu J."/>
            <person name="Maheshwari M."/>
            <person name="Nguyen B.-V."/>
            <person name="Okwuonu G.O."/>
            <person name="Pasternak S."/>
            <person name="Perez L.M."/>
            <person name="Plopper F.J.H."/>
            <person name="Santibanez J."/>
            <person name="Shen H."/>
            <person name="Tabor P.E."/>
            <person name="Verduzco D."/>
            <person name="Waldron L."/>
            <person name="Wang Q."/>
            <person name="Williams G.A."/>
            <person name="Zhang J."/>
            <person name="Zhou J."/>
            <person name="Allen C.C."/>
            <person name="Amin A.G."/>
            <person name="Anyalebechi V."/>
            <person name="Bailey M."/>
            <person name="Barbaria J.A."/>
            <person name="Bimage K.E."/>
            <person name="Bryant N.P."/>
            <person name="Burch P.E."/>
            <person name="Burkett C.E."/>
            <person name="Burrell K.L."/>
            <person name="Calderon E."/>
            <person name="Cardenas V."/>
            <person name="Carter K."/>
            <person name="Casias K."/>
            <person name="Cavazos I."/>
            <person name="Cavazos S.R."/>
            <person name="Ceasar H."/>
            <person name="Chacko J."/>
            <person name="Chan S.N."/>
            <person name="Chavez D."/>
            <person name="Christopoulos C."/>
            <person name="Chu J."/>
            <person name="Cockrell R."/>
            <person name="Cox C.D."/>
            <person name="Dang M."/>
            <person name="Dathorne S.R."/>
            <person name="David R."/>
            <person name="Davis C.M."/>
            <person name="Davy-Carroll L."/>
            <person name="Deshazo D.R."/>
            <person name="Donlin J.E."/>
            <person name="D'Souza L."/>
            <person name="Eaves K.A."/>
            <person name="Egan A."/>
            <person name="Emery-Cohen A.J."/>
            <person name="Escotto M."/>
            <person name="Flagg N."/>
            <person name="Forbes L.D."/>
            <person name="Gabisi A.M."/>
            <person name="Garza M."/>
            <person name="Hamilton C."/>
            <person name="Henderson N."/>
            <person name="Hernandez O."/>
            <person name="Hines S."/>
            <person name="Hogues M.E."/>
            <person name="Huang M."/>
            <person name="Idlebird D.G."/>
            <person name="Johnson R."/>
            <person name="Jolivet A."/>
            <person name="Jones S."/>
            <person name="Kagan R."/>
            <person name="King L.M."/>
            <person name="Leal B."/>
            <person name="Lebow H."/>
            <person name="Lee S."/>
            <person name="LeVan J.M."/>
            <person name="Lewis L.C."/>
            <person name="London P."/>
            <person name="Lorensuhewa L.M."/>
            <person name="Loulseged H."/>
            <person name="Lovett D.A."/>
            <person name="Lucier A."/>
            <person name="Lucier R.L."/>
            <person name="Ma J."/>
            <person name="Madu R.C."/>
            <person name="Mapua P."/>
            <person name="Martindale A.D."/>
            <person name="Martinez E."/>
            <person name="Massey E."/>
            <person name="Mawhiney S."/>
            <person name="Meador M.G."/>
            <person name="Mendez S."/>
            <person name="Mercado C."/>
            <person name="Mercado I.C."/>
            <person name="Merritt C.E."/>
            <person name="Miner Z.L."/>
            <person name="Minja E."/>
            <person name="Mitchell T."/>
            <person name="Mohabbat F."/>
            <person name="Mohabbat K."/>
            <person name="Montgomery B."/>
            <person name="Moore N."/>
            <person name="Morris S."/>
            <person name="Munidasa M."/>
            <person name="Ngo R.N."/>
            <person name="Nguyen N.B."/>
            <person name="Nickerson E."/>
            <person name="Nwaokelemeh O.O."/>
            <person name="Nwokenkwo S."/>
            <person name="Obregon M."/>
            <person name="Oguh M."/>
            <person name="Oragunye N."/>
            <person name="Oviedo R.J."/>
            <person name="Parish B.J."/>
            <person name="Parker D.N."/>
            <person name="Parrish J."/>
            <person name="Parks K.L."/>
            <person name="Paul H.A."/>
            <person name="Payton B.A."/>
            <person name="Perez A."/>
            <person name="Perrin W."/>
            <person name="Pickens A."/>
            <person name="Primus E.L."/>
            <person name="Pu L.-L."/>
            <person name="Puazo M."/>
            <person name="Quiles M.M."/>
            <person name="Quiroz J.B."/>
            <person name="Rabata D."/>
            <person name="Reeves K."/>
            <person name="Ruiz S.J."/>
            <person name="Shao H."/>
            <person name="Sisson I."/>
            <person name="Sonaike T."/>
            <person name="Sorelle R.P."/>
            <person name="Sutton A.E."/>
            <person name="Svatek A.F."/>
            <person name="Svetz L.A."/>
            <person name="Tamerisa K.S."/>
            <person name="Taylor T.R."/>
            <person name="Teague B."/>
            <person name="Thomas N."/>
            <person name="Thorn R.D."/>
            <person name="Trejos Z.Y."/>
            <person name="Trevino B.K."/>
            <person name="Ukegbu O.N."/>
            <person name="Urban J.B."/>
            <person name="Vasquez L.I."/>
            <person name="Vera V.A."/>
            <person name="Villasana D.M."/>
            <person name="Wang L."/>
            <person name="Ward-Moore S."/>
            <person name="Warren J.T."/>
            <person name="Wei X."/>
            <person name="White F."/>
            <person name="Williamson A.L."/>
            <person name="Wleczyk R."/>
            <person name="Wooden H.S."/>
            <person name="Wooden S.H."/>
            <person name="Yen J."/>
            <person name="Yoon L."/>
            <person name="Yoon V."/>
            <person name="Zorrilla S.E."/>
            <person name="Nelson D."/>
            <person name="Kucherlapati R."/>
            <person name="Weinstock G."/>
            <person name="Gibbs R.A."/>
        </authorList>
    </citation>
    <scope>NUCLEOTIDE SEQUENCE [LARGE SCALE GENOMIC DNA]</scope>
</reference>
<reference key="3">
    <citation type="journal article" date="2004" name="Genome Res.">
        <title>The status, quality, and expansion of the NIH full-length cDNA project: the Mammalian Gene Collection (MGC).</title>
        <authorList>
            <consortium name="The MGC Project Team"/>
        </authorList>
    </citation>
    <scope>NUCLEOTIDE SEQUENCE [LARGE SCALE MRNA] (ISOFORM 1)</scope>
    <source>
        <tissue>Brain</tissue>
    </source>
</reference>
<reference key="4">
    <citation type="journal article" date="2008" name="J. Biol. Chem.">
        <title>Protein kinase Cepsilon binds peripherin and induces its aggregation, which is accompanied by apoptosis of neuroblastoma cells.</title>
        <authorList>
            <person name="Sunesson L."/>
            <person name="Hellman U."/>
            <person name="Larsson C."/>
        </authorList>
    </citation>
    <scope>INTERACTION WITH PRKCE</scope>
    <scope>SUBCELLULAR LOCATION</scope>
</reference>
<reference key="5">
    <citation type="journal article" date="2010" name="Cell Tissue Res.">
        <title>Expression of peripherin in human cochlea.</title>
        <authorList>
            <person name="Liu W."/>
            <person name="Kinnefors A."/>
            <person name="Bostroem M."/>
            <person name="Rask-Andersen H."/>
        </authorList>
    </citation>
    <scope>TISSUE SPECIFICITY</scope>
</reference>
<reference key="6">
    <citation type="journal article" date="2013" name="Acta Neuropathol.">
        <title>Charcot-Marie-Tooth type 2B disease-causing RAB7A mutant proteins show altered interaction with the neuronal intermediate filament peripherin.</title>
        <authorList>
            <person name="Cogli L."/>
            <person name="Progida C."/>
            <person name="Thomas C.L."/>
            <person name="Spencer-Dene B."/>
            <person name="Donno C."/>
            <person name="Schiavo G."/>
            <person name="Bucci C."/>
        </authorList>
    </citation>
    <scope>INTERACTION WITH RAB7A</scope>
</reference>
<reference key="7">
    <citation type="journal article" date="2014" name="J. Proteomics">
        <title>An enzyme assisted RP-RPLC approach for in-depth analysis of human liver phosphoproteome.</title>
        <authorList>
            <person name="Bian Y."/>
            <person name="Song C."/>
            <person name="Cheng K."/>
            <person name="Dong M."/>
            <person name="Wang F."/>
            <person name="Huang J."/>
            <person name="Sun D."/>
            <person name="Wang L."/>
            <person name="Ye M."/>
            <person name="Zou H."/>
        </authorList>
    </citation>
    <scope>IDENTIFICATION BY MASS SPECTROMETRY [LARGE SCALE ANALYSIS]</scope>
    <source>
        <tissue>Liver</tissue>
    </source>
</reference>
<reference key="8">
    <citation type="journal article" date="2004" name="Brain Pathol.">
        <title>A pathogenic peripherin gene mutation in a patient with amyotrophic lateral sclerosis.</title>
        <authorList>
            <person name="Leung C.L."/>
            <person name="He C.Z."/>
            <person name="Kaufmann P."/>
            <person name="Chin S.S."/>
            <person name="Naini A."/>
            <person name="Liem R.K."/>
            <person name="Mitsumoto H."/>
            <person name="Hays A.P."/>
        </authorList>
    </citation>
    <scope>INVOLVEMENT IN ALS</scope>
    <scope>VARIANT ALS TYR-141</scope>
    <scope>CHARACTERIZATION OF VARIANT ALS TYR-141</scope>
    <scope>FUNCTION</scope>
    <scope>SUBUNIT</scope>
    <scope>SUBCELLULAR LOCATION</scope>
</reference>
<reference key="9">
    <citation type="journal article" date="2004" name="J. Biol. Chem.">
        <title>A frameshift deletion in peripherin gene associated with amyotrophic lateral sclerosis.</title>
        <authorList>
            <person name="Gros-Louis F."/>
            <person name="Lariviere R."/>
            <person name="Gowing G."/>
            <person name="Laurent S."/>
            <person name="Camu W."/>
            <person name="Bouchard J.P."/>
            <person name="Meininger V."/>
            <person name="Rouleau G.A."/>
            <person name="Julien J.P."/>
        </authorList>
    </citation>
    <scope>INVOLVEMENT IN ALS</scope>
    <scope>FUNCTION</scope>
    <scope>SUBCELLULAR LOCATION</scope>
</reference>
<reference key="10">
    <citation type="journal article" date="2011" name="Neurobiol. Aging">
        <title>A novel peripherin gene (PRPH) mutation identified in one sporadic amyotrophic lateral sclerosis patient.</title>
        <authorList>
            <person name="Corrado L."/>
            <person name="Carlomagno Y."/>
            <person name="Falasco L."/>
            <person name="Mellone S."/>
            <person name="Godi M."/>
            <person name="Cova E."/>
            <person name="Cereda C."/>
            <person name="Testa L."/>
            <person name="Mazzini L."/>
            <person name="D'Alfonso S."/>
        </authorList>
    </citation>
    <scope>VARIANTS ALS PRO-133 AND TYR-141</scope>
</reference>
<sequence length="470" mass="53651">MSHHPSGLRAGFSSTSYRRTFGPPPSLSPGAFSYSSSSRFSSSRLLGSASPSSSVRLGSFRSPRAGAGALLRLPSERLDFSMAEALNQEFLATRSNEKQELQELNDRFANFIEKVRFLEQQNAALRGELSQARGQEPARADQLCQQELRELRRELELLGRERDRVQVERDGLAEDLAALKQRLEEETRKREDAEHNLVLFRKDVDDATLSRLELERKIESLMDEIEFLKKLHEEELRDLQVSVESQQVQQVEVEATVKPELTAALRDIRAQYESIAAKNLQEAEEWYKSKYADLSDAANRNHEALRQAKQEMNESRRQIQSLTCEVDGLRGTNEALLRQLRELEEQFALEAGGYQAGAARLEEELRQLKEEMARHLREYQELLNVKMALDIEIATYRKLLEGEESRISVPVHSFASLNIKTTVPEVEPPQDSHSRKTVLIKTIETRNGEVVTESQKEQRSELDKSSAHSY</sequence>